<evidence type="ECO:0000255" key="1">
    <source>
        <dbReference type="HAMAP-Rule" id="MF_00564"/>
    </source>
</evidence>
<organism>
    <name type="scientific">Listeria monocytogenes serotype 4b (strain F2365)</name>
    <dbReference type="NCBI Taxonomy" id="265669"/>
    <lineage>
        <taxon>Bacteria</taxon>
        <taxon>Bacillati</taxon>
        <taxon>Bacillota</taxon>
        <taxon>Bacilli</taxon>
        <taxon>Bacillales</taxon>
        <taxon>Listeriaceae</taxon>
        <taxon>Listeria</taxon>
    </lineage>
</organism>
<proteinExistence type="inferred from homology"/>
<gene>
    <name evidence="1" type="primary">rph</name>
    <name type="ordered locus">LMOf2365_1247</name>
</gene>
<name>RNPH_LISMF</name>
<feature type="chain" id="PRO_0000139905" description="Ribonuclease PH">
    <location>
        <begin position="1"/>
        <end position="248"/>
    </location>
</feature>
<feature type="binding site" evidence="1">
    <location>
        <position position="86"/>
    </location>
    <ligand>
        <name>phosphate</name>
        <dbReference type="ChEBI" id="CHEBI:43474"/>
        <note>substrate</note>
    </ligand>
</feature>
<feature type="binding site" evidence="1">
    <location>
        <begin position="124"/>
        <end position="126"/>
    </location>
    <ligand>
        <name>phosphate</name>
        <dbReference type="ChEBI" id="CHEBI:43474"/>
        <note>substrate</note>
    </ligand>
</feature>
<protein>
    <recommendedName>
        <fullName evidence="1">Ribonuclease PH</fullName>
        <shortName evidence="1">RNase PH</shortName>
        <ecNumber evidence="1">2.7.7.56</ecNumber>
    </recommendedName>
    <alternativeName>
        <fullName evidence="1">tRNA nucleotidyltransferase</fullName>
    </alternativeName>
</protein>
<keyword id="KW-0548">Nucleotidyltransferase</keyword>
<keyword id="KW-0694">RNA-binding</keyword>
<keyword id="KW-0698">rRNA processing</keyword>
<keyword id="KW-0808">Transferase</keyword>
<keyword id="KW-0819">tRNA processing</keyword>
<keyword id="KW-0820">tRNA-binding</keyword>
<comment type="function">
    <text evidence="1">Phosphorolytic 3'-5' exoribonuclease that plays an important role in tRNA 3'-end maturation. Removes nucleotide residues following the 3'-CCA terminus of tRNAs; can also add nucleotides to the ends of RNA molecules by using nucleoside diphosphates as substrates, but this may not be physiologically important. Probably plays a role in initiation of 16S rRNA degradation (leading to ribosome degradation) during starvation.</text>
</comment>
<comment type="catalytic activity">
    <reaction evidence="1">
        <text>tRNA(n+1) + phosphate = tRNA(n) + a ribonucleoside 5'-diphosphate</text>
        <dbReference type="Rhea" id="RHEA:10628"/>
        <dbReference type="Rhea" id="RHEA-COMP:17343"/>
        <dbReference type="Rhea" id="RHEA-COMP:17344"/>
        <dbReference type="ChEBI" id="CHEBI:43474"/>
        <dbReference type="ChEBI" id="CHEBI:57930"/>
        <dbReference type="ChEBI" id="CHEBI:173114"/>
        <dbReference type="EC" id="2.7.7.56"/>
    </reaction>
</comment>
<comment type="subunit">
    <text evidence="1">Homohexameric ring arranged as a trimer of dimers.</text>
</comment>
<comment type="similarity">
    <text evidence="1">Belongs to the RNase PH family.</text>
</comment>
<accession>Q720J1</accession>
<sequence length="248" mass="26670">MRVDGRESNALRNIEVTPDYLMHPEGSVLIASGNTKVICSASVETKVPPFMRGEGRGWISAEYSMLPRATNTRNIRESSKGKVTGRTMEIQRLIGRALRAVVDLDALGERTIWLDCDVIQADGGTRTASITGAFIAMVMAIAKLDEAVPFAKFPVKDFLAATSVGVLEEGGTVLDLNYVEDSAAQVDMNIIMTGSGAFVELQGTGEEATFSETELAELIALGKKGISELIEIQKETLGDKVTARIKGE</sequence>
<reference key="1">
    <citation type="journal article" date="2004" name="Nucleic Acids Res.">
        <title>Whole genome comparisons of serotype 4b and 1/2a strains of the food-borne pathogen Listeria monocytogenes reveal new insights into the core genome components of this species.</title>
        <authorList>
            <person name="Nelson K.E."/>
            <person name="Fouts D.E."/>
            <person name="Mongodin E.F."/>
            <person name="Ravel J."/>
            <person name="DeBoy R.T."/>
            <person name="Kolonay J.F."/>
            <person name="Rasko D.A."/>
            <person name="Angiuoli S.V."/>
            <person name="Gill S.R."/>
            <person name="Paulsen I.T."/>
            <person name="Peterson J.D."/>
            <person name="White O."/>
            <person name="Nelson W.C."/>
            <person name="Nierman W.C."/>
            <person name="Beanan M.J."/>
            <person name="Brinkac L.M."/>
            <person name="Daugherty S.C."/>
            <person name="Dodson R.J."/>
            <person name="Durkin A.S."/>
            <person name="Madupu R."/>
            <person name="Haft D.H."/>
            <person name="Selengut J."/>
            <person name="Van Aken S.E."/>
            <person name="Khouri H.M."/>
            <person name="Fedorova N."/>
            <person name="Forberger H.A."/>
            <person name="Tran B."/>
            <person name="Kathariou S."/>
            <person name="Wonderling L.D."/>
            <person name="Uhlich G.A."/>
            <person name="Bayles D.O."/>
            <person name="Luchansky J.B."/>
            <person name="Fraser C.M."/>
        </authorList>
    </citation>
    <scope>NUCLEOTIDE SEQUENCE [LARGE SCALE GENOMIC DNA]</scope>
    <source>
        <strain>F2365</strain>
    </source>
</reference>
<dbReference type="EC" id="2.7.7.56" evidence="1"/>
<dbReference type="EMBL" id="AE017262">
    <property type="protein sequence ID" value="AAT04023.1"/>
    <property type="molecule type" value="Genomic_DNA"/>
</dbReference>
<dbReference type="RefSeq" id="WP_003726032.1">
    <property type="nucleotide sequence ID" value="NC_002973.6"/>
</dbReference>
<dbReference type="SMR" id="Q720J1"/>
<dbReference type="KEGG" id="lmf:LMOf2365_1247"/>
<dbReference type="HOGENOM" id="CLU_050858_0_0_9"/>
<dbReference type="GO" id="GO:0000175">
    <property type="term" value="F:3'-5'-RNA exonuclease activity"/>
    <property type="evidence" value="ECO:0007669"/>
    <property type="project" value="UniProtKB-UniRule"/>
</dbReference>
<dbReference type="GO" id="GO:0000049">
    <property type="term" value="F:tRNA binding"/>
    <property type="evidence" value="ECO:0007669"/>
    <property type="project" value="UniProtKB-UniRule"/>
</dbReference>
<dbReference type="GO" id="GO:0009022">
    <property type="term" value="F:tRNA nucleotidyltransferase activity"/>
    <property type="evidence" value="ECO:0007669"/>
    <property type="project" value="UniProtKB-UniRule"/>
</dbReference>
<dbReference type="GO" id="GO:0016075">
    <property type="term" value="P:rRNA catabolic process"/>
    <property type="evidence" value="ECO:0007669"/>
    <property type="project" value="UniProtKB-UniRule"/>
</dbReference>
<dbReference type="GO" id="GO:0006364">
    <property type="term" value="P:rRNA processing"/>
    <property type="evidence" value="ECO:0007669"/>
    <property type="project" value="UniProtKB-KW"/>
</dbReference>
<dbReference type="GO" id="GO:0008033">
    <property type="term" value="P:tRNA processing"/>
    <property type="evidence" value="ECO:0007669"/>
    <property type="project" value="UniProtKB-UniRule"/>
</dbReference>
<dbReference type="CDD" id="cd11362">
    <property type="entry name" value="RNase_PH_bact"/>
    <property type="match status" value="1"/>
</dbReference>
<dbReference type="FunFam" id="3.30.230.70:FF:000003">
    <property type="entry name" value="Ribonuclease PH"/>
    <property type="match status" value="1"/>
</dbReference>
<dbReference type="Gene3D" id="3.30.230.70">
    <property type="entry name" value="GHMP Kinase, N-terminal domain"/>
    <property type="match status" value="1"/>
</dbReference>
<dbReference type="HAMAP" id="MF_00564">
    <property type="entry name" value="RNase_PH"/>
    <property type="match status" value="1"/>
</dbReference>
<dbReference type="InterPro" id="IPR001247">
    <property type="entry name" value="ExoRNase_PH_dom1"/>
</dbReference>
<dbReference type="InterPro" id="IPR015847">
    <property type="entry name" value="ExoRNase_PH_dom2"/>
</dbReference>
<dbReference type="InterPro" id="IPR036345">
    <property type="entry name" value="ExoRNase_PH_dom2_sf"/>
</dbReference>
<dbReference type="InterPro" id="IPR027408">
    <property type="entry name" value="PNPase/RNase_PH_dom_sf"/>
</dbReference>
<dbReference type="InterPro" id="IPR020568">
    <property type="entry name" value="Ribosomal_Su5_D2-typ_SF"/>
</dbReference>
<dbReference type="InterPro" id="IPR050080">
    <property type="entry name" value="RNase_PH"/>
</dbReference>
<dbReference type="InterPro" id="IPR002381">
    <property type="entry name" value="RNase_PH_bac-type"/>
</dbReference>
<dbReference type="InterPro" id="IPR018336">
    <property type="entry name" value="RNase_PH_CS"/>
</dbReference>
<dbReference type="NCBIfam" id="TIGR01966">
    <property type="entry name" value="RNasePH"/>
    <property type="match status" value="1"/>
</dbReference>
<dbReference type="PANTHER" id="PTHR11953">
    <property type="entry name" value="EXOSOME COMPLEX COMPONENT"/>
    <property type="match status" value="1"/>
</dbReference>
<dbReference type="PANTHER" id="PTHR11953:SF0">
    <property type="entry name" value="EXOSOME COMPLEX COMPONENT RRP41"/>
    <property type="match status" value="1"/>
</dbReference>
<dbReference type="Pfam" id="PF01138">
    <property type="entry name" value="RNase_PH"/>
    <property type="match status" value="1"/>
</dbReference>
<dbReference type="Pfam" id="PF03725">
    <property type="entry name" value="RNase_PH_C"/>
    <property type="match status" value="1"/>
</dbReference>
<dbReference type="SUPFAM" id="SSF55666">
    <property type="entry name" value="Ribonuclease PH domain 2-like"/>
    <property type="match status" value="1"/>
</dbReference>
<dbReference type="SUPFAM" id="SSF54211">
    <property type="entry name" value="Ribosomal protein S5 domain 2-like"/>
    <property type="match status" value="1"/>
</dbReference>
<dbReference type="PROSITE" id="PS01277">
    <property type="entry name" value="RIBONUCLEASE_PH"/>
    <property type="match status" value="1"/>
</dbReference>